<feature type="chain" id="PRO_0000161140" description="Elongation factor Ts">
    <location>
        <begin position="1"/>
        <end position="276"/>
    </location>
</feature>
<feature type="region of interest" description="Involved in Mg(2+) ion dislocation from EF-Tu" evidence="1">
    <location>
        <begin position="81"/>
        <end position="84"/>
    </location>
</feature>
<accession>Q6AEV6</accession>
<reference key="1">
    <citation type="journal article" date="2004" name="Mol. Plant Microbe Interact.">
        <title>The genome sequence of the Gram-positive sugarcane pathogen Leifsonia xyli subsp. xyli.</title>
        <authorList>
            <person name="Monteiro-Vitorello C.B."/>
            <person name="Camargo L.E.A."/>
            <person name="Van Sluys M.A."/>
            <person name="Kitajima J.P."/>
            <person name="Truffi D."/>
            <person name="do Amaral A.M."/>
            <person name="Harakava R."/>
            <person name="de Oliveira J.C.F."/>
            <person name="Wood D."/>
            <person name="de Oliveira M.C."/>
            <person name="Miyaki C.Y."/>
            <person name="Takita M.A."/>
            <person name="da Silva A.C.R."/>
            <person name="Furlan L.R."/>
            <person name="Carraro D.M."/>
            <person name="Camarotte G."/>
            <person name="Almeida N.F. Jr."/>
            <person name="Carrer H."/>
            <person name="Coutinho L.L."/>
            <person name="El-Dorry H.A."/>
            <person name="Ferro M.I.T."/>
            <person name="Gagliardi P.R."/>
            <person name="Giglioti E."/>
            <person name="Goldman M.H.S."/>
            <person name="Goldman G.H."/>
            <person name="Kimura E.T."/>
            <person name="Ferro E.S."/>
            <person name="Kuramae E.E."/>
            <person name="Lemos E.G.M."/>
            <person name="Lemos M.V.F."/>
            <person name="Mauro S.M.Z."/>
            <person name="Machado M.A."/>
            <person name="Marino C.L."/>
            <person name="Menck C.F."/>
            <person name="Nunes L.R."/>
            <person name="Oliveira R.C."/>
            <person name="Pereira G.G."/>
            <person name="Siqueira W."/>
            <person name="de Souza A.A."/>
            <person name="Tsai S.M."/>
            <person name="Zanca A.S."/>
            <person name="Simpson A.J.G."/>
            <person name="Brumbley S.M."/>
            <person name="Setubal J.C."/>
        </authorList>
    </citation>
    <scope>NUCLEOTIDE SEQUENCE [LARGE SCALE GENOMIC DNA]</scope>
    <source>
        <strain>CTCB07</strain>
    </source>
</reference>
<keyword id="KW-0963">Cytoplasm</keyword>
<keyword id="KW-0251">Elongation factor</keyword>
<keyword id="KW-0648">Protein biosynthesis</keyword>
<keyword id="KW-1185">Reference proteome</keyword>
<evidence type="ECO:0000255" key="1">
    <source>
        <dbReference type="HAMAP-Rule" id="MF_00050"/>
    </source>
</evidence>
<protein>
    <recommendedName>
        <fullName evidence="1">Elongation factor Ts</fullName>
        <shortName evidence="1">EF-Ts</shortName>
    </recommendedName>
</protein>
<sequence>MANISIADIKALREQLGTGMVDTKKALEEAGGDLEKATEILRLKGAKGNAKRADRSTSEGLVAAKENANGTATMIELACETDFVAKGEKFVALSDTVLDAIAAAGSTTIEEALAAPAGSQTVAEFIGDEAAILGEKIELRRVAVVNGEHVAIYLHKTSKDLPPQVGVVVGYAGDDTETARSIAQHISFANPAHLTREDVPAEEVESERRIVKEISRSEGKPEAALPKIIEGRLGAFFKQVALLEQEYARDNKLTISQVLKDSGLTVSGFARFKVGA</sequence>
<gene>
    <name evidence="1" type="primary">tsf</name>
    <name type="ordered locus">Lxx12450</name>
</gene>
<comment type="function">
    <text evidence="1">Associates with the EF-Tu.GDP complex and induces the exchange of GDP to GTP. It remains bound to the aminoacyl-tRNA.EF-Tu.GTP complex up to the GTP hydrolysis stage on the ribosome.</text>
</comment>
<comment type="subcellular location">
    <subcellularLocation>
        <location evidence="1">Cytoplasm</location>
    </subcellularLocation>
</comment>
<comment type="similarity">
    <text evidence="1">Belongs to the EF-Ts family.</text>
</comment>
<organism>
    <name type="scientific">Leifsonia xyli subsp. xyli (strain CTCB07)</name>
    <dbReference type="NCBI Taxonomy" id="281090"/>
    <lineage>
        <taxon>Bacteria</taxon>
        <taxon>Bacillati</taxon>
        <taxon>Actinomycetota</taxon>
        <taxon>Actinomycetes</taxon>
        <taxon>Micrococcales</taxon>
        <taxon>Microbacteriaceae</taxon>
        <taxon>Leifsonia</taxon>
    </lineage>
</organism>
<proteinExistence type="inferred from homology"/>
<dbReference type="EMBL" id="AE016822">
    <property type="protein sequence ID" value="AAT89089.1"/>
    <property type="molecule type" value="Genomic_DNA"/>
</dbReference>
<dbReference type="RefSeq" id="WP_011186084.1">
    <property type="nucleotide sequence ID" value="NC_006087.1"/>
</dbReference>
<dbReference type="SMR" id="Q6AEV6"/>
<dbReference type="STRING" id="281090.Lxx12450"/>
<dbReference type="KEGG" id="lxx:Lxx12450"/>
<dbReference type="eggNOG" id="COG0264">
    <property type="taxonomic scope" value="Bacteria"/>
</dbReference>
<dbReference type="HOGENOM" id="CLU_047155_0_0_11"/>
<dbReference type="Proteomes" id="UP000001306">
    <property type="component" value="Chromosome"/>
</dbReference>
<dbReference type="GO" id="GO:0005737">
    <property type="term" value="C:cytoplasm"/>
    <property type="evidence" value="ECO:0007669"/>
    <property type="project" value="UniProtKB-SubCell"/>
</dbReference>
<dbReference type="GO" id="GO:0003746">
    <property type="term" value="F:translation elongation factor activity"/>
    <property type="evidence" value="ECO:0007669"/>
    <property type="project" value="UniProtKB-UniRule"/>
</dbReference>
<dbReference type="CDD" id="cd14275">
    <property type="entry name" value="UBA_EF-Ts"/>
    <property type="match status" value="1"/>
</dbReference>
<dbReference type="FunFam" id="1.10.286.20:FF:000001">
    <property type="entry name" value="Elongation factor Ts"/>
    <property type="match status" value="1"/>
</dbReference>
<dbReference type="FunFam" id="1.10.8.10:FF:000001">
    <property type="entry name" value="Elongation factor Ts"/>
    <property type="match status" value="1"/>
</dbReference>
<dbReference type="Gene3D" id="1.10.286.20">
    <property type="match status" value="1"/>
</dbReference>
<dbReference type="Gene3D" id="1.10.8.10">
    <property type="entry name" value="DNA helicase RuvA subunit, C-terminal domain"/>
    <property type="match status" value="1"/>
</dbReference>
<dbReference type="Gene3D" id="3.30.479.20">
    <property type="entry name" value="Elongation factor Ts, dimerisation domain"/>
    <property type="match status" value="2"/>
</dbReference>
<dbReference type="HAMAP" id="MF_00050">
    <property type="entry name" value="EF_Ts"/>
    <property type="match status" value="1"/>
</dbReference>
<dbReference type="InterPro" id="IPR036402">
    <property type="entry name" value="EF-Ts_dimer_sf"/>
</dbReference>
<dbReference type="InterPro" id="IPR001816">
    <property type="entry name" value="Transl_elong_EFTs/EF1B"/>
</dbReference>
<dbReference type="InterPro" id="IPR014039">
    <property type="entry name" value="Transl_elong_EFTs/EF1B_dimer"/>
</dbReference>
<dbReference type="InterPro" id="IPR009060">
    <property type="entry name" value="UBA-like_sf"/>
</dbReference>
<dbReference type="NCBIfam" id="TIGR00116">
    <property type="entry name" value="tsf"/>
    <property type="match status" value="1"/>
</dbReference>
<dbReference type="PANTHER" id="PTHR11741">
    <property type="entry name" value="ELONGATION FACTOR TS"/>
    <property type="match status" value="1"/>
</dbReference>
<dbReference type="PANTHER" id="PTHR11741:SF0">
    <property type="entry name" value="ELONGATION FACTOR TS, MITOCHONDRIAL"/>
    <property type="match status" value="1"/>
</dbReference>
<dbReference type="Pfam" id="PF00889">
    <property type="entry name" value="EF_TS"/>
    <property type="match status" value="1"/>
</dbReference>
<dbReference type="SUPFAM" id="SSF54713">
    <property type="entry name" value="Elongation factor Ts (EF-Ts), dimerisation domain"/>
    <property type="match status" value="1"/>
</dbReference>
<dbReference type="SUPFAM" id="SSF46934">
    <property type="entry name" value="UBA-like"/>
    <property type="match status" value="1"/>
</dbReference>
<name>EFTS_LEIXX</name>